<organism>
    <name type="scientific">Homo sapiens</name>
    <name type="common">Human</name>
    <dbReference type="NCBI Taxonomy" id="9606"/>
    <lineage>
        <taxon>Eukaryota</taxon>
        <taxon>Metazoa</taxon>
        <taxon>Chordata</taxon>
        <taxon>Craniata</taxon>
        <taxon>Vertebrata</taxon>
        <taxon>Euteleostomi</taxon>
        <taxon>Mammalia</taxon>
        <taxon>Eutheria</taxon>
        <taxon>Euarchontoglires</taxon>
        <taxon>Primates</taxon>
        <taxon>Haplorrhini</taxon>
        <taxon>Catarrhini</taxon>
        <taxon>Hominidae</taxon>
        <taxon>Homo</taxon>
    </lineage>
</organism>
<reference key="1">
    <citation type="journal article" date="2001" name="Nature">
        <title>The DNA sequence and comparative analysis of human chromosome 20.</title>
        <authorList>
            <person name="Deloukas P."/>
            <person name="Matthews L.H."/>
            <person name="Ashurst J.L."/>
            <person name="Burton J."/>
            <person name="Gilbert J.G.R."/>
            <person name="Jones M."/>
            <person name="Stavrides G."/>
            <person name="Almeida J.P."/>
            <person name="Babbage A.K."/>
            <person name="Bagguley C.L."/>
            <person name="Bailey J."/>
            <person name="Barlow K.F."/>
            <person name="Bates K.N."/>
            <person name="Beard L.M."/>
            <person name="Beare D.M."/>
            <person name="Beasley O.P."/>
            <person name="Bird C.P."/>
            <person name="Blakey S.E."/>
            <person name="Bridgeman A.M."/>
            <person name="Brown A.J."/>
            <person name="Buck D."/>
            <person name="Burrill W.D."/>
            <person name="Butler A.P."/>
            <person name="Carder C."/>
            <person name="Carter N.P."/>
            <person name="Chapman J.C."/>
            <person name="Clamp M."/>
            <person name="Clark G."/>
            <person name="Clark L.N."/>
            <person name="Clark S.Y."/>
            <person name="Clee C.M."/>
            <person name="Clegg S."/>
            <person name="Cobley V.E."/>
            <person name="Collier R.E."/>
            <person name="Connor R.E."/>
            <person name="Corby N.R."/>
            <person name="Coulson A."/>
            <person name="Coville G.J."/>
            <person name="Deadman R."/>
            <person name="Dhami P.D."/>
            <person name="Dunn M."/>
            <person name="Ellington A.G."/>
            <person name="Frankland J.A."/>
            <person name="Fraser A."/>
            <person name="French L."/>
            <person name="Garner P."/>
            <person name="Grafham D.V."/>
            <person name="Griffiths C."/>
            <person name="Griffiths M.N.D."/>
            <person name="Gwilliam R."/>
            <person name="Hall R.E."/>
            <person name="Hammond S."/>
            <person name="Harley J.L."/>
            <person name="Heath P.D."/>
            <person name="Ho S."/>
            <person name="Holden J.L."/>
            <person name="Howden P.J."/>
            <person name="Huckle E."/>
            <person name="Hunt A.R."/>
            <person name="Hunt S.E."/>
            <person name="Jekosch K."/>
            <person name="Johnson C.M."/>
            <person name="Johnson D."/>
            <person name="Kay M.P."/>
            <person name="Kimberley A.M."/>
            <person name="King A."/>
            <person name="Knights A."/>
            <person name="Laird G.K."/>
            <person name="Lawlor S."/>
            <person name="Lehvaeslaiho M.H."/>
            <person name="Leversha M.A."/>
            <person name="Lloyd C."/>
            <person name="Lloyd D.M."/>
            <person name="Lovell J.D."/>
            <person name="Marsh V.L."/>
            <person name="Martin S.L."/>
            <person name="McConnachie L.J."/>
            <person name="McLay K."/>
            <person name="McMurray A.A."/>
            <person name="Milne S.A."/>
            <person name="Mistry D."/>
            <person name="Moore M.J.F."/>
            <person name="Mullikin J.C."/>
            <person name="Nickerson T."/>
            <person name="Oliver K."/>
            <person name="Parker A."/>
            <person name="Patel R."/>
            <person name="Pearce T.A.V."/>
            <person name="Peck A.I."/>
            <person name="Phillimore B.J.C.T."/>
            <person name="Prathalingam S.R."/>
            <person name="Plumb R.W."/>
            <person name="Ramsay H."/>
            <person name="Rice C.M."/>
            <person name="Ross M.T."/>
            <person name="Scott C.E."/>
            <person name="Sehra H.K."/>
            <person name="Shownkeen R."/>
            <person name="Sims S."/>
            <person name="Skuce C.D."/>
            <person name="Smith M.L."/>
            <person name="Soderlund C."/>
            <person name="Steward C.A."/>
            <person name="Sulston J.E."/>
            <person name="Swann R.M."/>
            <person name="Sycamore N."/>
            <person name="Taylor R."/>
            <person name="Tee L."/>
            <person name="Thomas D.W."/>
            <person name="Thorpe A."/>
            <person name="Tracey A."/>
            <person name="Tromans A.C."/>
            <person name="Vaudin M."/>
            <person name="Wall M."/>
            <person name="Wallis J.M."/>
            <person name="Whitehead S.L."/>
            <person name="Whittaker P."/>
            <person name="Willey D.L."/>
            <person name="Williams L."/>
            <person name="Williams S.A."/>
            <person name="Wilming L."/>
            <person name="Wray P.W."/>
            <person name="Hubbard T."/>
            <person name="Durbin R.M."/>
            <person name="Bentley D.R."/>
            <person name="Beck S."/>
            <person name="Rogers J."/>
        </authorList>
    </citation>
    <scope>NUCLEOTIDE SEQUENCE [LARGE SCALE GENOMIC DNA]</scope>
</reference>
<reference key="2">
    <citation type="journal article" date="2004" name="Genome Res.">
        <title>The status, quality, and expansion of the NIH full-length cDNA project: the Mammalian Gene Collection (MGC).</title>
        <authorList>
            <consortium name="The MGC Project Team"/>
        </authorList>
    </citation>
    <scope>NUCLEOTIDE SEQUENCE [LARGE SCALE MRNA]</scope>
    <source>
        <tissue>Brain</tissue>
    </source>
</reference>
<keyword id="KW-1185">Reference proteome</keyword>
<sequence>MDCKSPKRANICPHLPGGGLFSTPPSQAAWRTLLTALCFPGPTCTGPMREGPRAVYNPPRAHRNSSDNCVMKHLLCAGDKNGTRRHALPSPLEGSFQPGRQIPPPQTPSTDPQTLPLSFRSLLRCHQLCAASLPPSLKLP</sequence>
<name>YT011_HUMAN</name>
<dbReference type="EMBL" id="AL133343">
    <property type="status" value="NOT_ANNOTATED_CDS"/>
    <property type="molecule type" value="Genomic_DNA"/>
</dbReference>
<dbReference type="EMBL" id="BC111383">
    <property type="protein sequence ID" value="AAI11384.1"/>
    <property type="molecule type" value="mRNA"/>
</dbReference>
<dbReference type="EMBL" id="BC130462">
    <property type="protein sequence ID" value="AAI30463.1"/>
    <property type="molecule type" value="mRNA"/>
</dbReference>
<dbReference type="EMBL" id="BC130464">
    <property type="protein sequence ID" value="AAI30465.1"/>
    <property type="molecule type" value="mRNA"/>
</dbReference>
<dbReference type="IntAct" id="Q5W150">
    <property type="interactions" value="7"/>
</dbReference>
<dbReference type="GlyGen" id="Q5W150">
    <property type="glycosylation" value="1 site"/>
</dbReference>
<dbReference type="BioMuta" id="-"/>
<dbReference type="DMDM" id="74748025"/>
<dbReference type="AGR" id="HGNC:44310"/>
<dbReference type="neXtProt" id="NX_Q5W150"/>
<dbReference type="InParanoid" id="Q5W150"/>
<dbReference type="PAN-GO" id="Q5W150">
    <property type="GO annotations" value="0 GO annotations based on evolutionary models"/>
</dbReference>
<dbReference type="PhylomeDB" id="Q5W150"/>
<dbReference type="PathwayCommons" id="Q5W150"/>
<dbReference type="Pharos" id="Q5W150">
    <property type="development level" value="Tdark"/>
</dbReference>
<dbReference type="Proteomes" id="UP000005640">
    <property type="component" value="Unplaced"/>
</dbReference>
<dbReference type="RNAct" id="Q5W150">
    <property type="molecule type" value="protein"/>
</dbReference>
<comment type="interaction">
    <interactant intactId="EBI-10248148">
        <id>Q5W150</id>
    </interactant>
    <interactant intactId="EBI-473189">
        <id>Q96D09</id>
        <label>GPRASP2</label>
    </interactant>
    <organismsDiffer>false</organismsDiffer>
    <experiments>3</experiments>
</comment>
<comment type="interaction">
    <interactant intactId="EBI-10248148">
        <id>Q5W150</id>
    </interactant>
    <interactant intactId="EBI-10171697">
        <id>Q6A162</id>
        <label>KRT40</label>
    </interactant>
    <organismsDiffer>false</organismsDiffer>
    <experiments>3</experiments>
</comment>
<comment type="interaction">
    <interactant intactId="EBI-10248148">
        <id>Q5W150</id>
    </interactant>
    <interactant intactId="EBI-724076">
        <id>Q99750</id>
        <label>MDFI</label>
    </interactant>
    <organismsDiffer>false</organismsDiffer>
    <experiments>3</experiments>
</comment>
<comment type="interaction">
    <interactant intactId="EBI-10248148">
        <id>Q5W150</id>
    </interactant>
    <interactant intactId="EBI-348380">
        <id>P25788</id>
        <label>PSMA3</label>
    </interactant>
    <organismsDiffer>false</organismsDiffer>
    <experiments>3</experiments>
</comment>
<comment type="interaction">
    <interactant intactId="EBI-10248148">
        <id>Q5W150</id>
    </interactant>
    <interactant intactId="EBI-742268">
        <id>O75478</id>
        <label>TADA2A</label>
    </interactant>
    <organismsDiffer>false</organismsDiffer>
    <experiments>3</experiments>
</comment>
<comment type="interaction">
    <interactant intactId="EBI-10248148">
        <id>Q5W150</id>
    </interactant>
    <interactant intactId="EBI-359224">
        <id>Q13077</id>
        <label>TRAF1</label>
    </interactant>
    <organismsDiffer>false</organismsDiffer>
    <experiments>3</experiments>
</comment>
<comment type="interaction">
    <interactant intactId="EBI-10248148">
        <id>Q5W150</id>
    </interactant>
    <interactant intactId="EBI-742327">
        <id>Q15654</id>
        <label>TRIP6</label>
    </interactant>
    <organismsDiffer>false</organismsDiffer>
    <experiments>3</experiments>
</comment>
<protein>
    <recommendedName>
        <fullName>Putative uncharacterized protein MGC163334</fullName>
    </recommendedName>
</protein>
<feature type="chain" id="PRO_0000336096" description="Putative uncharacterized protein MGC163334">
    <location>
        <begin position="1"/>
        <end position="140"/>
    </location>
</feature>
<feature type="region of interest" description="Disordered" evidence="1">
    <location>
        <begin position="80"/>
        <end position="115"/>
    </location>
</feature>
<accession>Q5W150</accession>
<evidence type="ECO:0000256" key="1">
    <source>
        <dbReference type="SAM" id="MobiDB-lite"/>
    </source>
</evidence>
<proteinExistence type="evidence at protein level"/>